<dbReference type="EMBL" id="BC129620">
    <property type="protein sequence ID" value="AAI29621.1"/>
    <property type="molecule type" value="mRNA"/>
</dbReference>
<dbReference type="RefSeq" id="NP_001091353.1">
    <property type="nucleotide sequence ID" value="NM_001097884.1"/>
</dbReference>
<dbReference type="SMR" id="A2VD93"/>
<dbReference type="DNASU" id="100037193"/>
<dbReference type="GeneID" id="100037193"/>
<dbReference type="KEGG" id="xla:100037193"/>
<dbReference type="AGR" id="Xenbase:XB-GENE-17342099"/>
<dbReference type="CTD" id="100037193"/>
<dbReference type="Xenbase" id="XB-GENE-17342099">
    <property type="gene designation" value="hspa14.S"/>
</dbReference>
<dbReference type="OrthoDB" id="29851at2759"/>
<dbReference type="Proteomes" id="UP000186698">
    <property type="component" value="Chromosome 3S"/>
</dbReference>
<dbReference type="Bgee" id="100037193">
    <property type="expression patterns" value="Expressed in neurula embryo and 19 other cell types or tissues"/>
</dbReference>
<dbReference type="GO" id="GO:0005737">
    <property type="term" value="C:cytoplasm"/>
    <property type="evidence" value="ECO:0000318"/>
    <property type="project" value="GO_Central"/>
</dbReference>
<dbReference type="GO" id="GO:0005829">
    <property type="term" value="C:cytosol"/>
    <property type="evidence" value="ECO:0000250"/>
    <property type="project" value="UniProtKB"/>
</dbReference>
<dbReference type="GO" id="GO:0005634">
    <property type="term" value="C:nucleus"/>
    <property type="evidence" value="ECO:0000318"/>
    <property type="project" value="GO_Central"/>
</dbReference>
<dbReference type="GO" id="GO:0005886">
    <property type="term" value="C:plasma membrane"/>
    <property type="evidence" value="ECO:0000318"/>
    <property type="project" value="GO_Central"/>
</dbReference>
<dbReference type="GO" id="GO:0005524">
    <property type="term" value="F:ATP binding"/>
    <property type="evidence" value="ECO:0007669"/>
    <property type="project" value="UniProtKB-KW"/>
</dbReference>
<dbReference type="GO" id="GO:0016887">
    <property type="term" value="F:ATP hydrolysis activity"/>
    <property type="evidence" value="ECO:0000318"/>
    <property type="project" value="GO_Central"/>
</dbReference>
<dbReference type="GO" id="GO:0140662">
    <property type="term" value="F:ATP-dependent protein folding chaperone"/>
    <property type="evidence" value="ECO:0007669"/>
    <property type="project" value="InterPro"/>
</dbReference>
<dbReference type="GO" id="GO:0031072">
    <property type="term" value="F:heat shock protein binding"/>
    <property type="evidence" value="ECO:0000318"/>
    <property type="project" value="GO_Central"/>
</dbReference>
<dbReference type="GO" id="GO:0044183">
    <property type="term" value="F:protein folding chaperone"/>
    <property type="evidence" value="ECO:0000318"/>
    <property type="project" value="GO_Central"/>
</dbReference>
<dbReference type="GO" id="GO:0051085">
    <property type="term" value="P:chaperone cofactor-dependent protein refolding"/>
    <property type="evidence" value="ECO:0000318"/>
    <property type="project" value="GO_Central"/>
</dbReference>
<dbReference type="GO" id="GO:0042026">
    <property type="term" value="P:protein refolding"/>
    <property type="evidence" value="ECO:0000318"/>
    <property type="project" value="GO_Central"/>
</dbReference>
<dbReference type="CDD" id="cd10238">
    <property type="entry name" value="ASKHA_NBD_HSP70_HSPA14"/>
    <property type="match status" value="1"/>
</dbReference>
<dbReference type="FunFam" id="2.60.34.10:FF:000013">
    <property type="entry name" value="Heat shock 70 kDa protein 14"/>
    <property type="match status" value="1"/>
</dbReference>
<dbReference type="FunFam" id="3.30.30.30:FF:000008">
    <property type="entry name" value="heat shock 70 kDa protein 14"/>
    <property type="match status" value="1"/>
</dbReference>
<dbReference type="FunFam" id="3.90.640.10:FF:000010">
    <property type="entry name" value="heat shock 70 kDa protein 14"/>
    <property type="match status" value="1"/>
</dbReference>
<dbReference type="FunFam" id="3.30.420.40:FF:000171">
    <property type="entry name" value="Heat shock 70 kDa protein 4"/>
    <property type="match status" value="1"/>
</dbReference>
<dbReference type="FunFam" id="3.30.420.40:FF:000433">
    <property type="entry name" value="Heat shock protein family A (Hsp70) member 14"/>
    <property type="match status" value="1"/>
</dbReference>
<dbReference type="Gene3D" id="3.30.30.30">
    <property type="match status" value="1"/>
</dbReference>
<dbReference type="Gene3D" id="3.30.420.40">
    <property type="match status" value="2"/>
</dbReference>
<dbReference type="Gene3D" id="3.90.640.10">
    <property type="entry name" value="Actin, Chain A, domain 4"/>
    <property type="match status" value="1"/>
</dbReference>
<dbReference type="Gene3D" id="2.60.34.10">
    <property type="entry name" value="Substrate Binding Domain Of DNAk, Chain A, domain 1"/>
    <property type="match status" value="1"/>
</dbReference>
<dbReference type="InterPro" id="IPR043129">
    <property type="entry name" value="ATPase_NBD"/>
</dbReference>
<dbReference type="InterPro" id="IPR029047">
    <property type="entry name" value="HSP70_peptide-bd_sf"/>
</dbReference>
<dbReference type="InterPro" id="IPR013126">
    <property type="entry name" value="Hsp_70_fam"/>
</dbReference>
<dbReference type="InterPro" id="IPR042049">
    <property type="entry name" value="HSPA14_NBD"/>
</dbReference>
<dbReference type="PANTHER" id="PTHR19375">
    <property type="entry name" value="HEAT SHOCK PROTEIN 70KDA"/>
    <property type="match status" value="1"/>
</dbReference>
<dbReference type="Pfam" id="PF00012">
    <property type="entry name" value="HSP70"/>
    <property type="match status" value="1"/>
</dbReference>
<dbReference type="PRINTS" id="PR00301">
    <property type="entry name" value="HEATSHOCK70"/>
</dbReference>
<dbReference type="SUPFAM" id="SSF53067">
    <property type="entry name" value="Actin-like ATPase domain"/>
    <property type="match status" value="2"/>
</dbReference>
<dbReference type="SUPFAM" id="SSF100920">
    <property type="entry name" value="Heat shock protein 70kD (HSP70), peptide-binding domain"/>
    <property type="match status" value="1"/>
</dbReference>
<keyword id="KW-0067">ATP-binding</keyword>
<keyword id="KW-0143">Chaperone</keyword>
<keyword id="KW-0963">Cytoplasm</keyword>
<keyword id="KW-0547">Nucleotide-binding</keyword>
<keyword id="KW-1185">Reference proteome</keyword>
<comment type="function">
    <text evidence="1">Component of the ribosome-associated complex (RAC), a complex involved in folding or maintaining nascent polypeptides in a folding-competent state.</text>
</comment>
<comment type="subunit">
    <text evidence="1">Component of ribosome-associated complex (RAC).</text>
</comment>
<comment type="subcellular location">
    <subcellularLocation>
        <location evidence="1">Cytoplasm</location>
        <location evidence="1">Cytosol</location>
    </subcellularLocation>
</comment>
<comment type="similarity">
    <text evidence="2">Belongs to the heat shock protein 70 family.</text>
</comment>
<feature type="chain" id="PRO_0000405829" description="Heat shock 70 kDa protein 14-B">
    <location>
        <begin position="1"/>
        <end position="507"/>
    </location>
</feature>
<reference key="1">
    <citation type="submission" date="2006-12" db="EMBL/GenBank/DDBJ databases">
        <authorList>
            <consortium name="NIH - Xenopus Gene Collection (XGC) project"/>
        </authorList>
    </citation>
    <scope>NUCLEOTIDE SEQUENCE [LARGE SCALE MRNA]</scope>
    <source>
        <tissue>Intestine</tissue>
    </source>
</reference>
<protein>
    <recommendedName>
        <fullName>Heat shock 70 kDa protein 14-B</fullName>
    </recommendedName>
</protein>
<gene>
    <name type="primary">hspa14-b</name>
</gene>
<proteinExistence type="evidence at transcript level"/>
<organism>
    <name type="scientific">Xenopus laevis</name>
    <name type="common">African clawed frog</name>
    <dbReference type="NCBI Taxonomy" id="8355"/>
    <lineage>
        <taxon>Eukaryota</taxon>
        <taxon>Metazoa</taxon>
        <taxon>Chordata</taxon>
        <taxon>Craniata</taxon>
        <taxon>Vertebrata</taxon>
        <taxon>Euteleostomi</taxon>
        <taxon>Amphibia</taxon>
        <taxon>Batrachia</taxon>
        <taxon>Anura</taxon>
        <taxon>Pipoidea</taxon>
        <taxon>Pipidae</taxon>
        <taxon>Xenopodinae</taxon>
        <taxon>Xenopus</taxon>
        <taxon>Xenopus</taxon>
    </lineage>
</organism>
<name>HS7EB_XENLA</name>
<accession>A2VD93</accession>
<sequence length="507" mass="54290">MAAIGVHLGCTCACVAVFKDGRADVVANDAGDRVTPAVVGFLEKEVIVGLAAKQSRVRNATNTIVKVKQILGRSYGDPIAQKHITESKCTVVEKGGKPKYEIDTGETQKLVSSEDVAKLIFSKMKETAQSALGSDVNDVVITVPFDFGESQKKALGEAASAAGFNILRMIHEPSAALLAYGIGQESPTGKSNVLVYKLGGTSLSVTMIEVNSGIYRVLATSTYDGIGGVCFTEALAQHLASEFQRTYKQDIRGNARAMMKLMNSADVAKHALSTLGSSNCFVDSLYDGIDFDCSVSRARFELICSSLFNQCIDPIKKLLEQVGFKATDVNQVVLCGGSARIPKLQQLIKDLFPEVEMLSSIPPDEVIPVGAAIQAGILLGKENTDLDTITIECSASDMLVKEIDESGNKFTVLLPSGTPLPARRQHVLQAPGNISSVCLELYESDGKSSVSEECKFAQVVLKDLQKKTSGVRDILTVLTMKRDGSLHITCTDKDSGKSEMITIEDTS</sequence>
<evidence type="ECO:0000250" key="1"/>
<evidence type="ECO:0000305" key="2"/>